<evidence type="ECO:0000255" key="1">
    <source>
        <dbReference type="HAMAP-Rule" id="MF_01176"/>
    </source>
</evidence>
<evidence type="ECO:0000256" key="2">
    <source>
        <dbReference type="SAM" id="MobiDB-lite"/>
    </source>
</evidence>
<proteinExistence type="inferred from homology"/>
<gene>
    <name evidence="1" type="primary">iscR</name>
    <name type="ordered locus">ECH74115_3763</name>
</gene>
<sequence>MRLTSKGRYAVTAMLDVALNSEAGPVPLADISERQGISLSYLEQLFSRLRKNGLVSSVRGPGGGYLLGKDASSIAVGEVISAVDESVDATRCQGKGGCQGGDKCLTHALWRDLSDRLTGFLNNITLGELVNNQEVLDVSGRQHTHDAPRTRTQDAIDVKLRA</sequence>
<accession>B5Z105</accession>
<name>ISCR_ECO5E</name>
<dbReference type="EMBL" id="CP001164">
    <property type="protein sequence ID" value="ACI37982.1"/>
    <property type="molecule type" value="Genomic_DNA"/>
</dbReference>
<dbReference type="RefSeq" id="WP_001241357.1">
    <property type="nucleotide sequence ID" value="NC_011353.1"/>
</dbReference>
<dbReference type="SMR" id="B5Z105"/>
<dbReference type="GeneID" id="86947421"/>
<dbReference type="KEGG" id="ecf:ECH74115_3763"/>
<dbReference type="HOGENOM" id="CLU_107144_0_0_6"/>
<dbReference type="GO" id="GO:0005829">
    <property type="term" value="C:cytosol"/>
    <property type="evidence" value="ECO:0007669"/>
    <property type="project" value="TreeGrafter"/>
</dbReference>
<dbReference type="GO" id="GO:0051537">
    <property type="term" value="F:2 iron, 2 sulfur cluster binding"/>
    <property type="evidence" value="ECO:0007669"/>
    <property type="project" value="UniProtKB-KW"/>
</dbReference>
<dbReference type="GO" id="GO:0003700">
    <property type="term" value="F:DNA-binding transcription factor activity"/>
    <property type="evidence" value="ECO:0007669"/>
    <property type="project" value="UniProtKB-UniRule"/>
</dbReference>
<dbReference type="GO" id="GO:0003690">
    <property type="term" value="F:double-stranded DNA binding"/>
    <property type="evidence" value="ECO:0007669"/>
    <property type="project" value="UniProtKB-UniRule"/>
</dbReference>
<dbReference type="GO" id="GO:0005506">
    <property type="term" value="F:iron ion binding"/>
    <property type="evidence" value="ECO:0007669"/>
    <property type="project" value="UniProtKB-UniRule"/>
</dbReference>
<dbReference type="FunFam" id="1.10.10.10:FF:000026">
    <property type="entry name" value="HTH-type transcriptional regulator IscR"/>
    <property type="match status" value="1"/>
</dbReference>
<dbReference type="Gene3D" id="1.10.10.10">
    <property type="entry name" value="Winged helix-like DNA-binding domain superfamily/Winged helix DNA-binding domain"/>
    <property type="match status" value="1"/>
</dbReference>
<dbReference type="HAMAP" id="MF_01176">
    <property type="entry name" value="HTH_type_IscR"/>
    <property type="match status" value="1"/>
</dbReference>
<dbReference type="InterPro" id="IPR010242">
    <property type="entry name" value="TF_HTH_IscR"/>
</dbReference>
<dbReference type="InterPro" id="IPR030489">
    <property type="entry name" value="TR_Rrf2-type_CS"/>
</dbReference>
<dbReference type="InterPro" id="IPR000944">
    <property type="entry name" value="Tscrpt_reg_Rrf2"/>
</dbReference>
<dbReference type="InterPro" id="IPR036388">
    <property type="entry name" value="WH-like_DNA-bd_sf"/>
</dbReference>
<dbReference type="InterPro" id="IPR036390">
    <property type="entry name" value="WH_DNA-bd_sf"/>
</dbReference>
<dbReference type="NCBIfam" id="TIGR02010">
    <property type="entry name" value="IscR"/>
    <property type="match status" value="1"/>
</dbReference>
<dbReference type="NCBIfam" id="NF008110">
    <property type="entry name" value="PRK10857.1"/>
    <property type="match status" value="1"/>
</dbReference>
<dbReference type="NCBIfam" id="TIGR00738">
    <property type="entry name" value="rrf2_super"/>
    <property type="match status" value="1"/>
</dbReference>
<dbReference type="PANTHER" id="PTHR33221:SF5">
    <property type="entry name" value="HTH-TYPE TRANSCRIPTIONAL REGULATOR ISCR"/>
    <property type="match status" value="1"/>
</dbReference>
<dbReference type="PANTHER" id="PTHR33221">
    <property type="entry name" value="WINGED HELIX-TURN-HELIX TRANSCRIPTIONAL REGULATOR, RRF2 FAMILY"/>
    <property type="match status" value="1"/>
</dbReference>
<dbReference type="Pfam" id="PF02082">
    <property type="entry name" value="Rrf2"/>
    <property type="match status" value="1"/>
</dbReference>
<dbReference type="SUPFAM" id="SSF46785">
    <property type="entry name" value="Winged helix' DNA-binding domain"/>
    <property type="match status" value="1"/>
</dbReference>
<dbReference type="PROSITE" id="PS01332">
    <property type="entry name" value="HTH_RRF2_1"/>
    <property type="match status" value="1"/>
</dbReference>
<dbReference type="PROSITE" id="PS51197">
    <property type="entry name" value="HTH_RRF2_2"/>
    <property type="match status" value="1"/>
</dbReference>
<organism>
    <name type="scientific">Escherichia coli O157:H7 (strain EC4115 / EHEC)</name>
    <dbReference type="NCBI Taxonomy" id="444450"/>
    <lineage>
        <taxon>Bacteria</taxon>
        <taxon>Pseudomonadati</taxon>
        <taxon>Pseudomonadota</taxon>
        <taxon>Gammaproteobacteria</taxon>
        <taxon>Enterobacterales</taxon>
        <taxon>Enterobacteriaceae</taxon>
        <taxon>Escherichia</taxon>
    </lineage>
</organism>
<comment type="function">
    <text evidence="1">Regulates the transcription of several operons and genes involved in the biogenesis of Fe-S clusters and Fe-S-containing proteins.</text>
</comment>
<comment type="cofactor">
    <cofactor evidence="1">
        <name>[2Fe-2S] cluster</name>
        <dbReference type="ChEBI" id="CHEBI:190135"/>
    </cofactor>
    <text evidence="1">Binds 1 [2Fe-2S] cluster.</text>
</comment>
<reference key="1">
    <citation type="journal article" date="2011" name="Proc. Natl. Acad. Sci. U.S.A.">
        <title>Genomic anatomy of Escherichia coli O157:H7 outbreaks.</title>
        <authorList>
            <person name="Eppinger M."/>
            <person name="Mammel M.K."/>
            <person name="Leclerc J.E."/>
            <person name="Ravel J."/>
            <person name="Cebula T.A."/>
        </authorList>
    </citation>
    <scope>NUCLEOTIDE SEQUENCE [LARGE SCALE GENOMIC DNA]</scope>
    <source>
        <strain>EC4115 / EHEC</strain>
    </source>
</reference>
<protein>
    <recommendedName>
        <fullName evidence="1">HTH-type transcriptional regulator IscR</fullName>
    </recommendedName>
</protein>
<feature type="chain" id="PRO_1000138094" description="HTH-type transcriptional regulator IscR">
    <location>
        <begin position="1"/>
        <end position="162"/>
    </location>
</feature>
<feature type="domain" description="HTH rrf2-type" evidence="1">
    <location>
        <begin position="2"/>
        <end position="131"/>
    </location>
</feature>
<feature type="DNA-binding region" description="H-T-H motif" evidence="1">
    <location>
        <begin position="28"/>
        <end position="51"/>
    </location>
</feature>
<feature type="region of interest" description="Disordered" evidence="2">
    <location>
        <begin position="140"/>
        <end position="162"/>
    </location>
</feature>
<feature type="compositionally biased region" description="Basic and acidic residues" evidence="2">
    <location>
        <begin position="143"/>
        <end position="162"/>
    </location>
</feature>
<feature type="binding site" evidence="1">
    <location>
        <position position="92"/>
    </location>
    <ligand>
        <name>[2Fe-2S] cluster</name>
        <dbReference type="ChEBI" id="CHEBI:190135"/>
    </ligand>
</feature>
<feature type="binding site" evidence="1">
    <location>
        <position position="98"/>
    </location>
    <ligand>
        <name>[2Fe-2S] cluster</name>
        <dbReference type="ChEBI" id="CHEBI:190135"/>
    </ligand>
</feature>
<feature type="binding site" evidence="1">
    <location>
        <position position="104"/>
    </location>
    <ligand>
        <name>[2Fe-2S] cluster</name>
        <dbReference type="ChEBI" id="CHEBI:190135"/>
    </ligand>
</feature>
<keyword id="KW-0001">2Fe-2S</keyword>
<keyword id="KW-0010">Activator</keyword>
<keyword id="KW-0238">DNA-binding</keyword>
<keyword id="KW-0408">Iron</keyword>
<keyword id="KW-0411">Iron-sulfur</keyword>
<keyword id="KW-0479">Metal-binding</keyword>
<keyword id="KW-0678">Repressor</keyword>
<keyword id="KW-0804">Transcription</keyword>
<keyword id="KW-0805">Transcription regulation</keyword>